<reference key="1">
    <citation type="journal article" date="2009" name="BMC Microbiol.">
        <title>The genome sequence of Geobacter metallireducens: features of metabolism, physiology and regulation common and dissimilar to Geobacter sulfurreducens.</title>
        <authorList>
            <person name="Aklujkar M."/>
            <person name="Krushkal J."/>
            <person name="DiBartolo G."/>
            <person name="Lapidus A."/>
            <person name="Land M.L."/>
            <person name="Lovley D.R."/>
        </authorList>
    </citation>
    <scope>NUCLEOTIDE SEQUENCE [LARGE SCALE GENOMIC DNA]</scope>
    <source>
        <strain>ATCC 53774 / DSM 7210 / GS-15</strain>
    </source>
</reference>
<evidence type="ECO:0000255" key="1">
    <source>
        <dbReference type="HAMAP-Rule" id="MF_00386"/>
    </source>
</evidence>
<protein>
    <recommendedName>
        <fullName evidence="1">Putative membrane protein insertion efficiency factor</fullName>
    </recommendedName>
</protein>
<gene>
    <name type="ordered locus">Gmet_3562</name>
</gene>
<name>YIDD_GEOMG</name>
<accession>Q39PQ7</accession>
<feature type="chain" id="PRO_0000253111" description="Putative membrane protein insertion efficiency factor">
    <location>
        <begin position="1"/>
        <end position="69"/>
    </location>
</feature>
<keyword id="KW-0997">Cell inner membrane</keyword>
<keyword id="KW-1003">Cell membrane</keyword>
<keyword id="KW-0472">Membrane</keyword>
<keyword id="KW-1185">Reference proteome</keyword>
<proteinExistence type="inferred from homology"/>
<dbReference type="EMBL" id="CP000148">
    <property type="protein sequence ID" value="ABB33767.1"/>
    <property type="molecule type" value="Genomic_DNA"/>
</dbReference>
<dbReference type="STRING" id="269799.Gmet_3562"/>
<dbReference type="KEGG" id="gme:Gmet_3562"/>
<dbReference type="eggNOG" id="COG0759">
    <property type="taxonomic scope" value="Bacteria"/>
</dbReference>
<dbReference type="HOGENOM" id="CLU_144811_6_0_7"/>
<dbReference type="Proteomes" id="UP000007073">
    <property type="component" value="Chromosome"/>
</dbReference>
<dbReference type="GO" id="GO:0005886">
    <property type="term" value="C:plasma membrane"/>
    <property type="evidence" value="ECO:0007669"/>
    <property type="project" value="UniProtKB-SubCell"/>
</dbReference>
<dbReference type="HAMAP" id="MF_00386">
    <property type="entry name" value="UPF0161_YidD"/>
    <property type="match status" value="1"/>
</dbReference>
<dbReference type="InterPro" id="IPR002696">
    <property type="entry name" value="Membr_insert_effic_factor_YidD"/>
</dbReference>
<dbReference type="NCBIfam" id="TIGR00278">
    <property type="entry name" value="membrane protein insertion efficiency factor YidD"/>
    <property type="match status" value="1"/>
</dbReference>
<dbReference type="PANTHER" id="PTHR33383">
    <property type="entry name" value="MEMBRANE PROTEIN INSERTION EFFICIENCY FACTOR-RELATED"/>
    <property type="match status" value="1"/>
</dbReference>
<dbReference type="PANTHER" id="PTHR33383:SF1">
    <property type="entry name" value="MEMBRANE PROTEIN INSERTION EFFICIENCY FACTOR-RELATED"/>
    <property type="match status" value="1"/>
</dbReference>
<dbReference type="Pfam" id="PF01809">
    <property type="entry name" value="YidD"/>
    <property type="match status" value="1"/>
</dbReference>
<dbReference type="SMART" id="SM01234">
    <property type="entry name" value="Haemolytic"/>
    <property type="match status" value="1"/>
</dbReference>
<organism>
    <name type="scientific">Geobacter metallireducens (strain ATCC 53774 / DSM 7210 / GS-15)</name>
    <dbReference type="NCBI Taxonomy" id="269799"/>
    <lineage>
        <taxon>Bacteria</taxon>
        <taxon>Pseudomonadati</taxon>
        <taxon>Thermodesulfobacteriota</taxon>
        <taxon>Desulfuromonadia</taxon>
        <taxon>Geobacterales</taxon>
        <taxon>Geobacteraceae</taxon>
        <taxon>Geobacter</taxon>
    </lineage>
</organism>
<sequence length="69" mass="7963">MLKILIKIIGIYQRYLSPLTGPTCRFYPSCSTYAKESLMRHGLLKGLWYSAVRIMKCHPYHPGGYDPVK</sequence>
<comment type="function">
    <text evidence="1">Could be involved in insertion of integral membrane proteins into the membrane.</text>
</comment>
<comment type="subcellular location">
    <subcellularLocation>
        <location evidence="1">Cell inner membrane</location>
        <topology evidence="1">Peripheral membrane protein</topology>
        <orientation evidence="1">Cytoplasmic side</orientation>
    </subcellularLocation>
</comment>
<comment type="similarity">
    <text evidence="1">Belongs to the UPF0161 family.</text>
</comment>